<comment type="function">
    <text evidence="1">The glycine cleavage system catalyzes the degradation of glycine. The P protein binds the alpha-amino group of glycine through its pyridoxal phosphate cofactor; CO(2) is released and the remaining methylamine moiety is then transferred to the lipoamide cofactor of the H protein.</text>
</comment>
<comment type="catalytic activity">
    <reaction evidence="1">
        <text>N(6)-[(R)-lipoyl]-L-lysyl-[glycine-cleavage complex H protein] + glycine + H(+) = N(6)-[(R)-S(8)-aminomethyldihydrolipoyl]-L-lysyl-[glycine-cleavage complex H protein] + CO2</text>
        <dbReference type="Rhea" id="RHEA:24304"/>
        <dbReference type="Rhea" id="RHEA-COMP:10494"/>
        <dbReference type="Rhea" id="RHEA-COMP:10495"/>
        <dbReference type="ChEBI" id="CHEBI:15378"/>
        <dbReference type="ChEBI" id="CHEBI:16526"/>
        <dbReference type="ChEBI" id="CHEBI:57305"/>
        <dbReference type="ChEBI" id="CHEBI:83099"/>
        <dbReference type="ChEBI" id="CHEBI:83143"/>
        <dbReference type="EC" id="1.4.4.2"/>
    </reaction>
</comment>
<comment type="cofactor">
    <cofactor evidence="1">
        <name>pyridoxal 5'-phosphate</name>
        <dbReference type="ChEBI" id="CHEBI:597326"/>
    </cofactor>
</comment>
<comment type="subunit">
    <text evidence="1">The glycine cleavage system is composed of four proteins: P, T, L and H.</text>
</comment>
<comment type="similarity">
    <text evidence="1">Belongs to the GcvP family.</text>
</comment>
<sequence length="959" mass="104737">MTQNLSQLEHNDAFIQRHIGSSVEQQQQMLAAVGASSLSTLIQQIVPADIQLPGPPPVGEAATEHQALAELKGIASQNQCYKSYIGMGYSPVLTPPVILRNMLENPGWYTAYTPYQPEVSQGRLEALLNFQQLTQDLTGLDLASASLLDEATAAAESMALAKRASKLKDANRFFVADDVHPQTLDVVLTRAETFGFDVIVDRAEKVLELDGIFGVLLQQVGTTGELHDYSALLAELKKRKIITSVAADIMALVLLTAPGAQGADVVFGSAQRFGVPMGYGGPHAAFFACRDEFKRSMPGRIIGVSRDAAGNTALRMAMQTREQHIRREKANSNICTSQVLLANIASLYAVYHGPQGLQRIAGRIHRMTDILAAGLQHAGLTLRFKHWFDTLTVEVKDKAAVLARALSFGINLRTDIHGAVGITLNETTSREDIQTLFALFVGDNHGLDIDQLDAAVSQHSQSIQDSMLRRDPILTHPVFNRYHSETEMMRYMHRLERKDLALNQAMIPLGSCTMKLNAAAEMIPITWPEFAELHPFCPPEQAAGYQQMIGQLSQWLVQLTGYDAVCMQPNSGAQGEYAGLLAIRRYHESRNQANRHICLIPSSAHGTNPASAQMAGMSVVVVACDKQGNIDLHDLRQKAEHAGDELSCIMVTYPSTHGVYEETIREVCQIVHQFGGQVYLDGANMNAQVGITTPGYIGADVSHLNLHKTFCIPHGGGGPGMGPIGVKAHLAPFVPGHSVVQIDGMTTQQGAVSAAPFGSASILPISWMYIRMMGADGLKQASQVAILNANYIATRLKNAYPVLYTGHDGRVAHECILDIRPLKEATGISEMDIAKRLIDFGFHAPTMSFPVAGTLMVEPTESESKVELDRFIDAMLAIRAEIEKVAQGEWPLEDNPLVNAPHTQAELVGEWTHPYSRELAVFPVAGVLENKYWPTVKRLDDVYGDRNLFCSCVPISDYE</sequence>
<accession>Q666R7</accession>
<protein>
    <recommendedName>
        <fullName evidence="1">Glycine dehydrogenase (decarboxylating)</fullName>
        <ecNumber evidence="1">1.4.4.2</ecNumber>
    </recommendedName>
    <alternativeName>
        <fullName evidence="1">Glycine cleavage system P-protein</fullName>
    </alternativeName>
    <alternativeName>
        <fullName evidence="1">Glycine decarboxylase</fullName>
    </alternativeName>
    <alternativeName>
        <fullName evidence="1">Glycine dehydrogenase (aminomethyl-transferring)</fullName>
    </alternativeName>
</protein>
<keyword id="KW-0560">Oxidoreductase</keyword>
<keyword id="KW-0663">Pyridoxal phosphate</keyword>
<proteinExistence type="inferred from homology"/>
<name>GCSP_YERPS</name>
<evidence type="ECO:0000255" key="1">
    <source>
        <dbReference type="HAMAP-Rule" id="MF_00711"/>
    </source>
</evidence>
<gene>
    <name evidence="1" type="primary">gcvP</name>
    <name type="ordered locus">YPTB3180</name>
</gene>
<organism>
    <name type="scientific">Yersinia pseudotuberculosis serotype I (strain IP32953)</name>
    <dbReference type="NCBI Taxonomy" id="273123"/>
    <lineage>
        <taxon>Bacteria</taxon>
        <taxon>Pseudomonadati</taxon>
        <taxon>Pseudomonadota</taxon>
        <taxon>Gammaproteobacteria</taxon>
        <taxon>Enterobacterales</taxon>
        <taxon>Yersiniaceae</taxon>
        <taxon>Yersinia</taxon>
    </lineage>
</organism>
<feature type="chain" id="PRO_0000227126" description="Glycine dehydrogenase (decarboxylating)">
    <location>
        <begin position="1"/>
        <end position="959"/>
    </location>
</feature>
<feature type="modified residue" description="N6-(pyridoxal phosphate)lysine" evidence="1">
    <location>
        <position position="708"/>
    </location>
</feature>
<dbReference type="EC" id="1.4.4.2" evidence="1"/>
<dbReference type="EMBL" id="BX936398">
    <property type="protein sequence ID" value="CAH22418.1"/>
    <property type="molecule type" value="Genomic_DNA"/>
</dbReference>
<dbReference type="RefSeq" id="WP_002209947.1">
    <property type="nucleotide sequence ID" value="NZ_CP009712.1"/>
</dbReference>
<dbReference type="SMR" id="Q666R7"/>
<dbReference type="GeneID" id="57973735"/>
<dbReference type="KEGG" id="ypo:BZ17_3431"/>
<dbReference type="KEGG" id="yps:YPTB3180"/>
<dbReference type="PATRIC" id="fig|273123.14.peg.3600"/>
<dbReference type="Proteomes" id="UP000001011">
    <property type="component" value="Chromosome"/>
</dbReference>
<dbReference type="GO" id="GO:0005829">
    <property type="term" value="C:cytosol"/>
    <property type="evidence" value="ECO:0007669"/>
    <property type="project" value="TreeGrafter"/>
</dbReference>
<dbReference type="GO" id="GO:0005960">
    <property type="term" value="C:glycine cleavage complex"/>
    <property type="evidence" value="ECO:0007669"/>
    <property type="project" value="TreeGrafter"/>
</dbReference>
<dbReference type="GO" id="GO:0016594">
    <property type="term" value="F:glycine binding"/>
    <property type="evidence" value="ECO:0007669"/>
    <property type="project" value="TreeGrafter"/>
</dbReference>
<dbReference type="GO" id="GO:0004375">
    <property type="term" value="F:glycine dehydrogenase (decarboxylating) activity"/>
    <property type="evidence" value="ECO:0007669"/>
    <property type="project" value="UniProtKB-EC"/>
</dbReference>
<dbReference type="GO" id="GO:0030170">
    <property type="term" value="F:pyridoxal phosphate binding"/>
    <property type="evidence" value="ECO:0007669"/>
    <property type="project" value="TreeGrafter"/>
</dbReference>
<dbReference type="GO" id="GO:0019464">
    <property type="term" value="P:glycine decarboxylation via glycine cleavage system"/>
    <property type="evidence" value="ECO:0007669"/>
    <property type="project" value="UniProtKB-UniRule"/>
</dbReference>
<dbReference type="CDD" id="cd00613">
    <property type="entry name" value="GDC-P"/>
    <property type="match status" value="2"/>
</dbReference>
<dbReference type="FunFam" id="3.40.640.10:FF:000005">
    <property type="entry name" value="Glycine dehydrogenase (decarboxylating), mitochondrial"/>
    <property type="match status" value="1"/>
</dbReference>
<dbReference type="FunFam" id="3.90.1150.10:FF:000007">
    <property type="entry name" value="Glycine dehydrogenase (decarboxylating), mitochondrial"/>
    <property type="match status" value="1"/>
</dbReference>
<dbReference type="FunFam" id="3.40.640.10:FF:000007">
    <property type="entry name" value="glycine dehydrogenase (Decarboxylating), mitochondrial"/>
    <property type="match status" value="1"/>
</dbReference>
<dbReference type="Gene3D" id="3.90.1150.10">
    <property type="entry name" value="Aspartate Aminotransferase, domain 1"/>
    <property type="match status" value="2"/>
</dbReference>
<dbReference type="Gene3D" id="3.40.640.10">
    <property type="entry name" value="Type I PLP-dependent aspartate aminotransferase-like (Major domain)"/>
    <property type="match status" value="2"/>
</dbReference>
<dbReference type="HAMAP" id="MF_00711">
    <property type="entry name" value="GcvP"/>
    <property type="match status" value="1"/>
</dbReference>
<dbReference type="InterPro" id="IPR003437">
    <property type="entry name" value="GcvP"/>
</dbReference>
<dbReference type="InterPro" id="IPR049316">
    <property type="entry name" value="GDC-P_C"/>
</dbReference>
<dbReference type="InterPro" id="IPR049315">
    <property type="entry name" value="GDC-P_N"/>
</dbReference>
<dbReference type="InterPro" id="IPR020581">
    <property type="entry name" value="GDC_P"/>
</dbReference>
<dbReference type="InterPro" id="IPR015424">
    <property type="entry name" value="PyrdxlP-dep_Trfase"/>
</dbReference>
<dbReference type="InterPro" id="IPR015421">
    <property type="entry name" value="PyrdxlP-dep_Trfase_major"/>
</dbReference>
<dbReference type="InterPro" id="IPR015422">
    <property type="entry name" value="PyrdxlP-dep_Trfase_small"/>
</dbReference>
<dbReference type="NCBIfam" id="TIGR00461">
    <property type="entry name" value="gcvP"/>
    <property type="match status" value="1"/>
</dbReference>
<dbReference type="NCBIfam" id="NF003346">
    <property type="entry name" value="PRK04366.1"/>
    <property type="match status" value="1"/>
</dbReference>
<dbReference type="PANTHER" id="PTHR11773:SF13">
    <property type="entry name" value="GLYCINE DEHYDROGENASE (DECARBOXYLATING)"/>
    <property type="match status" value="1"/>
</dbReference>
<dbReference type="PANTHER" id="PTHR11773">
    <property type="entry name" value="GLYCINE DEHYDROGENASE, DECARBOXYLATING"/>
    <property type="match status" value="1"/>
</dbReference>
<dbReference type="Pfam" id="PF21478">
    <property type="entry name" value="GcvP2_C"/>
    <property type="match status" value="1"/>
</dbReference>
<dbReference type="Pfam" id="PF02347">
    <property type="entry name" value="GDC-P"/>
    <property type="match status" value="2"/>
</dbReference>
<dbReference type="SUPFAM" id="SSF53383">
    <property type="entry name" value="PLP-dependent transferases"/>
    <property type="match status" value="2"/>
</dbReference>
<reference key="1">
    <citation type="journal article" date="2004" name="Proc. Natl. Acad. Sci. U.S.A.">
        <title>Insights into the evolution of Yersinia pestis through whole-genome comparison with Yersinia pseudotuberculosis.</title>
        <authorList>
            <person name="Chain P.S.G."/>
            <person name="Carniel E."/>
            <person name="Larimer F.W."/>
            <person name="Lamerdin J."/>
            <person name="Stoutland P.O."/>
            <person name="Regala W.M."/>
            <person name="Georgescu A.M."/>
            <person name="Vergez L.M."/>
            <person name="Land M.L."/>
            <person name="Motin V.L."/>
            <person name="Brubaker R.R."/>
            <person name="Fowler J."/>
            <person name="Hinnebusch J."/>
            <person name="Marceau M."/>
            <person name="Medigue C."/>
            <person name="Simonet M."/>
            <person name="Chenal-Francisque V."/>
            <person name="Souza B."/>
            <person name="Dacheux D."/>
            <person name="Elliott J.M."/>
            <person name="Derbise A."/>
            <person name="Hauser L.J."/>
            <person name="Garcia E."/>
        </authorList>
    </citation>
    <scope>NUCLEOTIDE SEQUENCE [LARGE SCALE GENOMIC DNA]</scope>
    <source>
        <strain>IP32953</strain>
    </source>
</reference>